<name>B1S3_LOXSN</name>
<accession>C0JB43</accession>
<proteinExistence type="evidence at transcript level"/>
<organism>
    <name type="scientific">Loxosceles spinulosa</name>
    <name type="common">Recluse spider</name>
    <dbReference type="NCBI Taxonomy" id="571532"/>
    <lineage>
        <taxon>Eukaryota</taxon>
        <taxon>Metazoa</taxon>
        <taxon>Ecdysozoa</taxon>
        <taxon>Arthropoda</taxon>
        <taxon>Chelicerata</taxon>
        <taxon>Arachnida</taxon>
        <taxon>Araneae</taxon>
        <taxon>Araneomorphae</taxon>
        <taxon>Haplogynae</taxon>
        <taxon>Scytodoidea</taxon>
        <taxon>Sicariidae</taxon>
        <taxon>Loxosceles</taxon>
    </lineage>
</organism>
<feature type="chain" id="PRO_0000392861" description="Dermonecrotic toxin LspiSicTox-betaIE2iii">
    <location>
        <begin position="1" status="less than"/>
        <end position="278"/>
    </location>
</feature>
<feature type="active site" evidence="5">
    <location>
        <position position="5"/>
    </location>
</feature>
<feature type="active site" description="Nucleophile" evidence="5">
    <location>
        <position position="41"/>
    </location>
</feature>
<feature type="binding site" evidence="5">
    <location>
        <position position="25"/>
    </location>
    <ligand>
        <name>Mg(2+)</name>
        <dbReference type="ChEBI" id="CHEBI:18420"/>
    </ligand>
</feature>
<feature type="binding site" evidence="5">
    <location>
        <position position="27"/>
    </location>
    <ligand>
        <name>Mg(2+)</name>
        <dbReference type="ChEBI" id="CHEBI:18420"/>
    </ligand>
</feature>
<feature type="binding site" evidence="5">
    <location>
        <position position="85"/>
    </location>
    <ligand>
        <name>Mg(2+)</name>
        <dbReference type="ChEBI" id="CHEBI:18420"/>
    </ligand>
</feature>
<feature type="disulfide bond" evidence="3">
    <location>
        <begin position="45"/>
        <end position="51"/>
    </location>
</feature>
<feature type="disulfide bond" evidence="3">
    <location>
        <begin position="47"/>
        <end position="190"/>
    </location>
</feature>
<feature type="non-terminal residue">
    <location>
        <position position="1"/>
    </location>
</feature>
<keyword id="KW-0204">Cytolysis</keyword>
<keyword id="KW-1061">Dermonecrotic toxin</keyword>
<keyword id="KW-1015">Disulfide bond</keyword>
<keyword id="KW-0354">Hemolysis</keyword>
<keyword id="KW-0442">Lipid degradation</keyword>
<keyword id="KW-0443">Lipid metabolism</keyword>
<keyword id="KW-0456">Lyase</keyword>
<keyword id="KW-0460">Magnesium</keyword>
<keyword id="KW-0479">Metal-binding</keyword>
<keyword id="KW-0964">Secreted</keyword>
<keyword id="KW-0800">Toxin</keyword>
<dbReference type="EC" id="4.6.1.-" evidence="4"/>
<dbReference type="EMBL" id="FJ171478">
    <property type="protein sequence ID" value="ACN48974.1"/>
    <property type="molecule type" value="mRNA"/>
</dbReference>
<dbReference type="SMR" id="C0JB43"/>
<dbReference type="GO" id="GO:0005576">
    <property type="term" value="C:extracellular region"/>
    <property type="evidence" value="ECO:0007669"/>
    <property type="project" value="UniProtKB-SubCell"/>
</dbReference>
<dbReference type="GO" id="GO:0016829">
    <property type="term" value="F:lyase activity"/>
    <property type="evidence" value="ECO:0007669"/>
    <property type="project" value="UniProtKB-KW"/>
</dbReference>
<dbReference type="GO" id="GO:0046872">
    <property type="term" value="F:metal ion binding"/>
    <property type="evidence" value="ECO:0007669"/>
    <property type="project" value="UniProtKB-KW"/>
</dbReference>
<dbReference type="GO" id="GO:0008081">
    <property type="term" value="F:phosphoric diester hydrolase activity"/>
    <property type="evidence" value="ECO:0007669"/>
    <property type="project" value="InterPro"/>
</dbReference>
<dbReference type="GO" id="GO:0090729">
    <property type="term" value="F:toxin activity"/>
    <property type="evidence" value="ECO:0007669"/>
    <property type="project" value="UniProtKB-KW"/>
</dbReference>
<dbReference type="GO" id="GO:0031640">
    <property type="term" value="P:killing of cells of another organism"/>
    <property type="evidence" value="ECO:0007669"/>
    <property type="project" value="UniProtKB-KW"/>
</dbReference>
<dbReference type="GO" id="GO:0016042">
    <property type="term" value="P:lipid catabolic process"/>
    <property type="evidence" value="ECO:0007669"/>
    <property type="project" value="UniProtKB-KW"/>
</dbReference>
<dbReference type="CDD" id="cd08576">
    <property type="entry name" value="GDPD_like_SMaseD_PLD"/>
    <property type="match status" value="1"/>
</dbReference>
<dbReference type="Gene3D" id="3.20.20.190">
    <property type="entry name" value="Phosphatidylinositol (PI) phosphodiesterase"/>
    <property type="match status" value="1"/>
</dbReference>
<dbReference type="InterPro" id="IPR017946">
    <property type="entry name" value="PLC-like_Pdiesterase_TIM-brl"/>
</dbReference>
<dbReference type="SUPFAM" id="SSF51695">
    <property type="entry name" value="PLC-like phosphodiesterases"/>
    <property type="match status" value="1"/>
</dbReference>
<comment type="function">
    <text evidence="1 3">Dermonecrotic toxins cleave the phosphodiester linkage between the phosphate and headgroup of certain phospholipids (sphingolipid and lysolipid substrates), forming an alcohol (often choline) and a cyclic phosphate (By similarity). This toxin acts on sphingomyelin (SM) (By similarity). It may also act on ceramide phosphoethanolamine (CPE), lysophosphatidylcholine (LPC) and lysophosphatidylethanolamine (LPE), but not on lysophosphatidylserine (LPS), and lysophosphatidylglycerol (LPG) (By similarity). It acts by transphosphatidylation, releasing exclusively cyclic phosphate products as second products (By similarity). Induces dermonecrosis, hemolysis, increased vascular permeability, edema, inflammatory response, and platelet aggregation (By similarity).</text>
</comment>
<comment type="catalytic activity">
    <reaction evidence="1">
        <text>an N-(acyl)-sphingosylphosphocholine = an N-(acyl)-sphingosyl-1,3-cyclic phosphate + choline</text>
        <dbReference type="Rhea" id="RHEA:60652"/>
        <dbReference type="ChEBI" id="CHEBI:15354"/>
        <dbReference type="ChEBI" id="CHEBI:64583"/>
        <dbReference type="ChEBI" id="CHEBI:143892"/>
    </reaction>
</comment>
<comment type="catalytic activity">
    <reaction evidence="1">
        <text>an N-(acyl)-sphingosylphosphoethanolamine = an N-(acyl)-sphingosyl-1,3-cyclic phosphate + ethanolamine</text>
        <dbReference type="Rhea" id="RHEA:60648"/>
        <dbReference type="ChEBI" id="CHEBI:57603"/>
        <dbReference type="ChEBI" id="CHEBI:143891"/>
        <dbReference type="ChEBI" id="CHEBI:143892"/>
    </reaction>
</comment>
<comment type="catalytic activity">
    <reaction evidence="1">
        <text>a 1-acyl-sn-glycero-3-phosphocholine = a 1-acyl-sn-glycero-2,3-cyclic phosphate + choline</text>
        <dbReference type="Rhea" id="RHEA:60700"/>
        <dbReference type="ChEBI" id="CHEBI:15354"/>
        <dbReference type="ChEBI" id="CHEBI:58168"/>
        <dbReference type="ChEBI" id="CHEBI:143947"/>
    </reaction>
</comment>
<comment type="catalytic activity">
    <reaction evidence="1">
        <text>a 1-acyl-sn-glycero-3-phosphoethanolamine = a 1-acyl-sn-glycero-2,3-cyclic phosphate + ethanolamine</text>
        <dbReference type="Rhea" id="RHEA:60704"/>
        <dbReference type="ChEBI" id="CHEBI:57603"/>
        <dbReference type="ChEBI" id="CHEBI:64381"/>
        <dbReference type="ChEBI" id="CHEBI:143947"/>
    </reaction>
</comment>
<comment type="cofactor">
    <cofactor evidence="5">
        <name>Mg(2+)</name>
        <dbReference type="ChEBI" id="CHEBI:18420"/>
    </cofactor>
    <text evidence="5">Binds 1 Mg(2+) ion per subunit.</text>
</comment>
<comment type="subcellular location">
    <subcellularLocation>
        <location evidence="8">Secreted</location>
    </subcellularLocation>
</comment>
<comment type="tissue specificity">
    <text evidence="8">Expressed by the venom gland.</text>
</comment>
<comment type="similarity">
    <text evidence="7">Belongs to the arthropod phospholipase D family. Class II subfamily.</text>
</comment>
<comment type="caution">
    <text evidence="1 2 4">The most common activity assay for dermonecrotic toxins detects enzymatic activity by monitoring choline release from substrate. Liberation of choline from sphingomyelin (SM) or lysophosphatidylcholine (LPC) is commonly assumed to result from substrate hydrolysis, giving either ceramide-1-phosphate (C1P) or lysophosphatidic acid (LPA), respectively, as a second product. However, two studies from Lajoie and colleagues (2013 and 2015) report the observation of exclusive formation of cyclic phosphate products as second products, resulting from intramolecular transphosphatidylation. Cyclic phosphates have vastly different biological properties from their monoester counterparts, and they may be relevant to the pathology of brown spider envenomation.</text>
</comment>
<sequence length="278" mass="31190">FALAHMVNDFDIMKSYLDEGANGIETDITFSPEGEPESAFHGVPCDCKRWCDRTVSFDSYLQKTSDLSTPGHPDYRENLLIIILDLKLNGLSQDALANGGRRLADKLAAHFWTVGRRDQRATFVVSVPQTSQKVFMKTFREGMEAIGMGDMNAKVGFDFTDNGDVSVTKAVYDELGITEHIWASDGITNCVALLFRGTSRLEELIQKRDEGESTYISKVYAWTYDKETSVVLALELGVDGVMTNYADFVISILNKPEHSSKYRLATYEDDPFERFKAV</sequence>
<reference key="1">
    <citation type="journal article" date="2009" name="Mol. Biol. Evol.">
        <title>Molecular evolution, functional variation, and proposed nomenclature of the gene family that includes sphingomyelinase D in sicariid spider venoms.</title>
        <authorList>
            <person name="Binford G.J."/>
            <person name="Bodner M.R."/>
            <person name="Cordes M.H."/>
            <person name="Baldwin K.L."/>
            <person name="Rynerson M.R."/>
            <person name="Burns S.N."/>
            <person name="Zobel-Thropp P.A."/>
        </authorList>
    </citation>
    <scope>NUCLEOTIDE SEQUENCE [MRNA]</scope>
    <scope>NOMENCLATURE</scope>
    <source>
        <strain>Borakalalo</strain>
        <tissue>Venom gland</tissue>
    </source>
</reference>
<protein>
    <recommendedName>
        <fullName evidence="6">Dermonecrotic toxin LspiSicTox-betaIE2iii</fullName>
        <ecNumber evidence="4">4.6.1.-</ecNumber>
    </recommendedName>
    <alternativeName>
        <fullName>Phospholipase D</fullName>
        <shortName>PLD</shortName>
    </alternativeName>
    <alternativeName>
        <fullName>Sphingomyelin phosphodiesterase D</fullName>
        <shortName>SMD</shortName>
        <shortName>SMase D</shortName>
        <shortName>Sphingomyelinase D</shortName>
    </alternativeName>
</protein>
<evidence type="ECO:0000250" key="1">
    <source>
        <dbReference type="UniProtKB" id="A0A0D4WTV1"/>
    </source>
</evidence>
<evidence type="ECO:0000250" key="2">
    <source>
        <dbReference type="UniProtKB" id="A0A0D4WV12"/>
    </source>
</evidence>
<evidence type="ECO:0000250" key="3">
    <source>
        <dbReference type="UniProtKB" id="P0CE80"/>
    </source>
</evidence>
<evidence type="ECO:0000250" key="4">
    <source>
        <dbReference type="UniProtKB" id="Q4ZFU2"/>
    </source>
</evidence>
<evidence type="ECO:0000250" key="5">
    <source>
        <dbReference type="UniProtKB" id="Q8I914"/>
    </source>
</evidence>
<evidence type="ECO:0000303" key="6">
    <source>
    </source>
</evidence>
<evidence type="ECO:0000305" key="7"/>
<evidence type="ECO:0000305" key="8">
    <source>
    </source>
</evidence>